<gene>
    <name type="ORF">GL10881</name>
</gene>
<sequence>MLRQLKLTLNISRWIFMPWQRQASASSSQVPPFLAPISDDVIVDYEDPDYLPLPEYPVRPNEPLETRKQRLLYQSRKRGMLENDLLLSTFAAKYLKDFSAEQTAIYDQLINGVSNDWDIYYWATEVKPTPEEYNTEIMKLLKEHVKNAERVTRFRQPDLT</sequence>
<dbReference type="EMBL" id="CH479181">
    <property type="protein sequence ID" value="EDW31589.1"/>
    <property type="molecule type" value="Genomic_DNA"/>
</dbReference>
<dbReference type="SMR" id="B4GDB3"/>
<dbReference type="STRING" id="7234.B4GDB3"/>
<dbReference type="EnsemblMetazoa" id="FBtr0176496">
    <property type="protein sequence ID" value="FBpp0174988"/>
    <property type="gene ID" value="FBgn0148491"/>
</dbReference>
<dbReference type="EnsemblMetazoa" id="XM_002015663.2">
    <property type="protein sequence ID" value="XP_002015699.1"/>
    <property type="gene ID" value="LOC6591079"/>
</dbReference>
<dbReference type="GeneID" id="6591079"/>
<dbReference type="KEGG" id="dpe:6591079"/>
<dbReference type="eggNOG" id="KOG3326">
    <property type="taxonomic scope" value="Eukaryota"/>
</dbReference>
<dbReference type="HOGENOM" id="CLU_103054_0_3_1"/>
<dbReference type="OMA" id="YGKPQNP"/>
<dbReference type="OrthoDB" id="284292at2759"/>
<dbReference type="PhylomeDB" id="B4GDB3"/>
<dbReference type="Proteomes" id="UP000008744">
    <property type="component" value="Unassembled WGS sequence"/>
</dbReference>
<dbReference type="GO" id="GO:0005759">
    <property type="term" value="C:mitochondrial matrix"/>
    <property type="evidence" value="ECO:0007669"/>
    <property type="project" value="UniProtKB-SubCell"/>
</dbReference>
<dbReference type="GO" id="GO:0005739">
    <property type="term" value="C:mitochondrion"/>
    <property type="evidence" value="ECO:0000250"/>
    <property type="project" value="UniProtKB"/>
</dbReference>
<dbReference type="GO" id="GO:0055070">
    <property type="term" value="P:copper ion homeostasis"/>
    <property type="evidence" value="ECO:0007669"/>
    <property type="project" value="EnsemblMetazoa"/>
</dbReference>
<dbReference type="GO" id="GO:0006121">
    <property type="term" value="P:mitochondrial electron transport, succinate to ubiquinone"/>
    <property type="evidence" value="ECO:0000250"/>
    <property type="project" value="UniProtKB"/>
</dbReference>
<dbReference type="GO" id="GO:0034553">
    <property type="term" value="P:mitochondrial respiratory chain complex II assembly"/>
    <property type="evidence" value="ECO:0007669"/>
    <property type="project" value="TreeGrafter"/>
</dbReference>
<dbReference type="GO" id="GO:0018293">
    <property type="term" value="P:protein-FAD linkage"/>
    <property type="evidence" value="ECO:0000250"/>
    <property type="project" value="UniProtKB"/>
</dbReference>
<dbReference type="GO" id="GO:0006099">
    <property type="term" value="P:tricarboxylic acid cycle"/>
    <property type="evidence" value="ECO:0007669"/>
    <property type="project" value="TreeGrafter"/>
</dbReference>
<dbReference type="FunFam" id="1.10.150.250:FF:000002">
    <property type="entry name" value="Succinate dehydrogenase assembly factor 2, mitochondrial"/>
    <property type="match status" value="1"/>
</dbReference>
<dbReference type="Gene3D" id="1.10.150.250">
    <property type="entry name" value="Flavinator of succinate dehydrogenase"/>
    <property type="match status" value="1"/>
</dbReference>
<dbReference type="HAMAP" id="MF_03057">
    <property type="entry name" value="SDHAF2"/>
    <property type="match status" value="1"/>
</dbReference>
<dbReference type="InterPro" id="IPR005631">
    <property type="entry name" value="SDH"/>
</dbReference>
<dbReference type="InterPro" id="IPR036714">
    <property type="entry name" value="SDH_sf"/>
</dbReference>
<dbReference type="InterPro" id="IPR028882">
    <property type="entry name" value="SDHAF2"/>
</dbReference>
<dbReference type="PANTHER" id="PTHR12469">
    <property type="entry name" value="PROTEIN EMI5 HOMOLOG, MITOCHONDRIAL"/>
    <property type="match status" value="1"/>
</dbReference>
<dbReference type="PANTHER" id="PTHR12469:SF2">
    <property type="entry name" value="SUCCINATE DEHYDROGENASE ASSEMBLY FACTOR 2, MITOCHONDRIAL"/>
    <property type="match status" value="1"/>
</dbReference>
<dbReference type="Pfam" id="PF03937">
    <property type="entry name" value="Sdh5"/>
    <property type="match status" value="1"/>
</dbReference>
<dbReference type="SUPFAM" id="SSF109910">
    <property type="entry name" value="YgfY-like"/>
    <property type="match status" value="1"/>
</dbReference>
<keyword id="KW-0143">Chaperone</keyword>
<keyword id="KW-0496">Mitochondrion</keyword>
<keyword id="KW-1185">Reference proteome</keyword>
<keyword id="KW-0809">Transit peptide</keyword>
<name>SDF2A_DROPE</name>
<reference key="1">
    <citation type="journal article" date="2007" name="Nature">
        <title>Evolution of genes and genomes on the Drosophila phylogeny.</title>
        <authorList>
            <consortium name="Drosophila 12 genomes consortium"/>
        </authorList>
    </citation>
    <scope>NUCLEOTIDE SEQUENCE [LARGE SCALE GENOMIC DNA]</scope>
    <source>
        <strain>MSH-3 / Tucson 14011-0111.49</strain>
    </source>
</reference>
<comment type="function">
    <text evidence="1">Plays an essential role in the assembly of succinate dehydrogenase (SDH), an enzyme complex (also referred to as respiratory complex II) that is a component of both the tricarboxylic acid (TCA) cycle and the mitochondrial electron transport chain, and which couples the oxidation of succinate to fumarate with the reduction of ubiquinone (coenzyme Q) to ubiquinol. Required for flavinylation (covalent attachment of FAD) of the flavoprotein subunit of the SDH catalytic dimer.</text>
</comment>
<comment type="subunit">
    <text evidence="1">Interacts with the flavoprotein subunit within the SDH catalytic dimer.</text>
</comment>
<comment type="subcellular location">
    <subcellularLocation>
        <location evidence="1">Mitochondrion matrix</location>
    </subcellularLocation>
</comment>
<comment type="similarity">
    <text evidence="1">Belongs to the SDHAF2 family.</text>
</comment>
<evidence type="ECO:0000255" key="1">
    <source>
        <dbReference type="HAMAP-Rule" id="MF_03057"/>
    </source>
</evidence>
<protein>
    <recommendedName>
        <fullName evidence="1">Succinate dehydrogenase assembly factor 2-A, mitochondrial</fullName>
        <shortName evidence="1">SDH assembly factor 2-A</shortName>
        <shortName evidence="1">SDHAF2-A</shortName>
    </recommendedName>
</protein>
<accession>B4GDB3</accession>
<feature type="transit peptide" description="Mitochondrion" evidence="1">
    <location>
        <begin position="1"/>
        <end position="30"/>
    </location>
</feature>
<feature type="chain" id="PRO_0000383171" description="Succinate dehydrogenase assembly factor 2-A, mitochondrial">
    <location>
        <begin position="31"/>
        <end position="160"/>
    </location>
</feature>
<organism>
    <name type="scientific">Drosophila persimilis</name>
    <name type="common">Fruit fly</name>
    <dbReference type="NCBI Taxonomy" id="7234"/>
    <lineage>
        <taxon>Eukaryota</taxon>
        <taxon>Metazoa</taxon>
        <taxon>Ecdysozoa</taxon>
        <taxon>Arthropoda</taxon>
        <taxon>Hexapoda</taxon>
        <taxon>Insecta</taxon>
        <taxon>Pterygota</taxon>
        <taxon>Neoptera</taxon>
        <taxon>Endopterygota</taxon>
        <taxon>Diptera</taxon>
        <taxon>Brachycera</taxon>
        <taxon>Muscomorpha</taxon>
        <taxon>Ephydroidea</taxon>
        <taxon>Drosophilidae</taxon>
        <taxon>Drosophila</taxon>
        <taxon>Sophophora</taxon>
    </lineage>
</organism>
<proteinExistence type="inferred from homology"/>